<gene>
    <name type="ordered locus">BSUIS_B0903</name>
</gene>
<sequence>MTEITDRYFNDVIARLSGLRDRLAAQMEKAADLIAAAARADRRVYVFGTGHSHMMAEELHYRAGGLAITVPILCGSIMLQDGAVASSHFERIEGAVRPILDRYGIRDGDVLVVVSNSGVNAAPIEAARYAREKGAAIIAPTSVAYSNTIARGRTQLLSLADVVLDNDAPSGDAVLEIAGSALKVGPVSTALGVTILNAVFADVAARLVGEGDAPIYLSANMPGSGDINRSLVERYRDRNPHL</sequence>
<name>Y3403_BRUSI</name>
<reference key="1">
    <citation type="submission" date="2007-12" db="EMBL/GenBank/DDBJ databases">
        <title>Brucella suis ATCC 23445 whole genome shotgun sequencing project.</title>
        <authorList>
            <person name="Setubal J.C."/>
            <person name="Bowns C."/>
            <person name="Boyle S."/>
            <person name="Crasta O.R."/>
            <person name="Czar M.J."/>
            <person name="Dharmanolla C."/>
            <person name="Gillespie J.J."/>
            <person name="Kenyon R.W."/>
            <person name="Lu J."/>
            <person name="Mane S."/>
            <person name="Mohapatra S."/>
            <person name="Nagrani S."/>
            <person name="Purkayastha A."/>
            <person name="Rajasimha H.K."/>
            <person name="Shallom J.M."/>
            <person name="Shallom S."/>
            <person name="Shukla M."/>
            <person name="Snyder E.E."/>
            <person name="Sobral B.W."/>
            <person name="Wattam A.R."/>
            <person name="Will R."/>
            <person name="Williams K."/>
            <person name="Yoo H."/>
            <person name="Bruce D."/>
            <person name="Detter C."/>
            <person name="Munk C."/>
            <person name="Brettin T.S."/>
        </authorList>
    </citation>
    <scope>NUCLEOTIDE SEQUENCE [LARGE SCALE GENOMIC DNA]</scope>
    <source>
        <strain>ATCC 23445 / NCTC 10510</strain>
    </source>
</reference>
<proteinExistence type="inferred from homology"/>
<evidence type="ECO:0000255" key="1">
    <source>
        <dbReference type="HAMAP-Rule" id="MF_01240"/>
    </source>
</evidence>
<comment type="similarity">
    <text evidence="1">Belongs to the UPF0309 family.</text>
</comment>
<accession>A9WVS4</accession>
<feature type="chain" id="PRO_1000085744" description="UPF0309 protein BSUIS_B0903">
    <location>
        <begin position="1"/>
        <end position="242"/>
    </location>
</feature>
<feature type="domain" description="SIS" evidence="1">
    <location>
        <begin position="30"/>
        <end position="214"/>
    </location>
</feature>
<dbReference type="EMBL" id="CP000912">
    <property type="protein sequence ID" value="ABY39860.1"/>
    <property type="molecule type" value="Genomic_DNA"/>
</dbReference>
<dbReference type="RefSeq" id="WP_006074027.1">
    <property type="nucleotide sequence ID" value="NC_010167.1"/>
</dbReference>
<dbReference type="SMR" id="A9WVS4"/>
<dbReference type="KEGG" id="bmt:BSUIS_B0903"/>
<dbReference type="HOGENOM" id="CLU_089975_0_0_5"/>
<dbReference type="Proteomes" id="UP000008545">
    <property type="component" value="Chromosome II"/>
</dbReference>
<dbReference type="GO" id="GO:0097367">
    <property type="term" value="F:carbohydrate derivative binding"/>
    <property type="evidence" value="ECO:0007669"/>
    <property type="project" value="InterPro"/>
</dbReference>
<dbReference type="GO" id="GO:1901135">
    <property type="term" value="P:carbohydrate derivative metabolic process"/>
    <property type="evidence" value="ECO:0007669"/>
    <property type="project" value="InterPro"/>
</dbReference>
<dbReference type="CDD" id="cd05013">
    <property type="entry name" value="SIS_RpiR"/>
    <property type="match status" value="1"/>
</dbReference>
<dbReference type="Gene3D" id="3.40.50.10490">
    <property type="entry name" value="Glucose-6-phosphate isomerase like protein, domain 1"/>
    <property type="match status" value="1"/>
</dbReference>
<dbReference type="HAMAP" id="MF_01240">
    <property type="entry name" value="UPF0309"/>
    <property type="match status" value="1"/>
</dbReference>
<dbReference type="InterPro" id="IPR035472">
    <property type="entry name" value="RpiR-like_SIS"/>
</dbReference>
<dbReference type="InterPro" id="IPR001347">
    <property type="entry name" value="SIS_dom"/>
</dbReference>
<dbReference type="InterPro" id="IPR046348">
    <property type="entry name" value="SIS_dom_sf"/>
</dbReference>
<dbReference type="InterPro" id="IPR050099">
    <property type="entry name" value="SIS_GmhA/DiaA_subfam"/>
</dbReference>
<dbReference type="InterPro" id="IPR022951">
    <property type="entry name" value="UPF0309"/>
</dbReference>
<dbReference type="NCBIfam" id="NF002805">
    <property type="entry name" value="PRK02947.1"/>
    <property type="match status" value="1"/>
</dbReference>
<dbReference type="PANTHER" id="PTHR30390:SF7">
    <property type="entry name" value="PHOSPHOHEPTOSE ISOMERASE"/>
    <property type="match status" value="1"/>
</dbReference>
<dbReference type="PANTHER" id="PTHR30390">
    <property type="entry name" value="SEDOHEPTULOSE 7-PHOSPHATE ISOMERASE / DNAA INITIATOR-ASSOCIATING FACTOR FOR REPLICATION INITIATION"/>
    <property type="match status" value="1"/>
</dbReference>
<dbReference type="Pfam" id="PF13580">
    <property type="entry name" value="SIS_2"/>
    <property type="match status" value="1"/>
</dbReference>
<dbReference type="SUPFAM" id="SSF53697">
    <property type="entry name" value="SIS domain"/>
    <property type="match status" value="1"/>
</dbReference>
<dbReference type="PROSITE" id="PS51464">
    <property type="entry name" value="SIS"/>
    <property type="match status" value="1"/>
</dbReference>
<organism>
    <name type="scientific">Brucella suis (strain ATCC 23445 / NCTC 10510)</name>
    <dbReference type="NCBI Taxonomy" id="470137"/>
    <lineage>
        <taxon>Bacteria</taxon>
        <taxon>Pseudomonadati</taxon>
        <taxon>Pseudomonadota</taxon>
        <taxon>Alphaproteobacteria</taxon>
        <taxon>Hyphomicrobiales</taxon>
        <taxon>Brucellaceae</taxon>
        <taxon>Brucella/Ochrobactrum group</taxon>
        <taxon>Brucella</taxon>
    </lineage>
</organism>
<protein>
    <recommendedName>
        <fullName evidence="1">UPF0309 protein BSUIS_B0903</fullName>
    </recommendedName>
</protein>